<evidence type="ECO:0000255" key="1">
    <source>
        <dbReference type="HAMAP-Rule" id="MF_01615"/>
    </source>
</evidence>
<dbReference type="EC" id="4.3.3.6" evidence="1"/>
<dbReference type="EC" id="3.5.1.2" evidence="1"/>
<dbReference type="EMBL" id="CR931997">
    <property type="protein sequence ID" value="CAI37222.1"/>
    <property type="molecule type" value="Genomic_DNA"/>
</dbReference>
<dbReference type="RefSeq" id="WP_011273621.1">
    <property type="nucleotide sequence ID" value="NC_007164.1"/>
</dbReference>
<dbReference type="SMR" id="Q4JVD5"/>
<dbReference type="STRING" id="306537.jk1058"/>
<dbReference type="MEROPS" id="C26.A32"/>
<dbReference type="KEGG" id="cjk:jk1058"/>
<dbReference type="PATRIC" id="fig|306537.10.peg.1070"/>
<dbReference type="eggNOG" id="COG0311">
    <property type="taxonomic scope" value="Bacteria"/>
</dbReference>
<dbReference type="HOGENOM" id="CLU_069674_2_0_11"/>
<dbReference type="OrthoDB" id="9810320at2"/>
<dbReference type="UniPathway" id="UPA00245"/>
<dbReference type="Proteomes" id="UP000000545">
    <property type="component" value="Chromosome"/>
</dbReference>
<dbReference type="GO" id="GO:0005829">
    <property type="term" value="C:cytosol"/>
    <property type="evidence" value="ECO:0007669"/>
    <property type="project" value="TreeGrafter"/>
</dbReference>
<dbReference type="GO" id="GO:1903600">
    <property type="term" value="C:glutaminase complex"/>
    <property type="evidence" value="ECO:0007669"/>
    <property type="project" value="TreeGrafter"/>
</dbReference>
<dbReference type="GO" id="GO:0004359">
    <property type="term" value="F:glutaminase activity"/>
    <property type="evidence" value="ECO:0007669"/>
    <property type="project" value="UniProtKB-UniRule"/>
</dbReference>
<dbReference type="GO" id="GO:0036381">
    <property type="term" value="F:pyridoxal 5'-phosphate synthase (glutamine hydrolysing) activity"/>
    <property type="evidence" value="ECO:0007669"/>
    <property type="project" value="UniProtKB-UniRule"/>
</dbReference>
<dbReference type="GO" id="GO:0006543">
    <property type="term" value="P:glutamine catabolic process"/>
    <property type="evidence" value="ECO:0007669"/>
    <property type="project" value="UniProtKB-UniRule"/>
</dbReference>
<dbReference type="GO" id="GO:0042823">
    <property type="term" value="P:pyridoxal phosphate biosynthetic process"/>
    <property type="evidence" value="ECO:0007669"/>
    <property type="project" value="UniProtKB-UniRule"/>
</dbReference>
<dbReference type="GO" id="GO:0008614">
    <property type="term" value="P:pyridoxine metabolic process"/>
    <property type="evidence" value="ECO:0007669"/>
    <property type="project" value="TreeGrafter"/>
</dbReference>
<dbReference type="CDD" id="cd01749">
    <property type="entry name" value="GATase1_PB"/>
    <property type="match status" value="1"/>
</dbReference>
<dbReference type="FunFam" id="3.40.50.880:FF:000010">
    <property type="entry name" value="uncharacterized protein LOC100176842 isoform X2"/>
    <property type="match status" value="1"/>
</dbReference>
<dbReference type="Gene3D" id="3.40.50.880">
    <property type="match status" value="1"/>
</dbReference>
<dbReference type="HAMAP" id="MF_01615">
    <property type="entry name" value="PdxT"/>
    <property type="match status" value="1"/>
</dbReference>
<dbReference type="InterPro" id="IPR029062">
    <property type="entry name" value="Class_I_gatase-like"/>
</dbReference>
<dbReference type="InterPro" id="IPR002161">
    <property type="entry name" value="PdxT/SNO"/>
</dbReference>
<dbReference type="NCBIfam" id="TIGR03800">
    <property type="entry name" value="PLP_synth_Pdx2"/>
    <property type="match status" value="1"/>
</dbReference>
<dbReference type="PANTHER" id="PTHR31559">
    <property type="entry name" value="PYRIDOXAL 5'-PHOSPHATE SYNTHASE SUBUNIT SNO"/>
    <property type="match status" value="1"/>
</dbReference>
<dbReference type="PANTHER" id="PTHR31559:SF0">
    <property type="entry name" value="PYRIDOXAL 5'-PHOSPHATE SYNTHASE SUBUNIT SNO1-RELATED"/>
    <property type="match status" value="1"/>
</dbReference>
<dbReference type="Pfam" id="PF01174">
    <property type="entry name" value="SNO"/>
    <property type="match status" value="1"/>
</dbReference>
<dbReference type="PIRSF" id="PIRSF005639">
    <property type="entry name" value="Glut_amidoT_SNO"/>
    <property type="match status" value="1"/>
</dbReference>
<dbReference type="SUPFAM" id="SSF52317">
    <property type="entry name" value="Class I glutamine amidotransferase-like"/>
    <property type="match status" value="1"/>
</dbReference>
<dbReference type="PROSITE" id="PS51130">
    <property type="entry name" value="PDXT_SNO_2"/>
    <property type="match status" value="1"/>
</dbReference>
<name>PDXT_CORJK</name>
<accession>Q4JVD5</accession>
<proteinExistence type="inferred from homology"/>
<comment type="function">
    <text evidence="1">Catalyzes the hydrolysis of glutamine to glutamate and ammonia as part of the biosynthesis of pyridoxal 5'-phosphate. The resulting ammonia molecule is channeled to the active site of PdxS.</text>
</comment>
<comment type="catalytic activity">
    <reaction evidence="1">
        <text>aldehydo-D-ribose 5-phosphate + D-glyceraldehyde 3-phosphate + L-glutamine = pyridoxal 5'-phosphate + L-glutamate + phosphate + 3 H2O + H(+)</text>
        <dbReference type="Rhea" id="RHEA:31507"/>
        <dbReference type="ChEBI" id="CHEBI:15377"/>
        <dbReference type="ChEBI" id="CHEBI:15378"/>
        <dbReference type="ChEBI" id="CHEBI:29985"/>
        <dbReference type="ChEBI" id="CHEBI:43474"/>
        <dbReference type="ChEBI" id="CHEBI:58273"/>
        <dbReference type="ChEBI" id="CHEBI:58359"/>
        <dbReference type="ChEBI" id="CHEBI:59776"/>
        <dbReference type="ChEBI" id="CHEBI:597326"/>
        <dbReference type="EC" id="4.3.3.6"/>
    </reaction>
</comment>
<comment type="catalytic activity">
    <reaction evidence="1">
        <text>L-glutamine + H2O = L-glutamate + NH4(+)</text>
        <dbReference type="Rhea" id="RHEA:15889"/>
        <dbReference type="ChEBI" id="CHEBI:15377"/>
        <dbReference type="ChEBI" id="CHEBI:28938"/>
        <dbReference type="ChEBI" id="CHEBI:29985"/>
        <dbReference type="ChEBI" id="CHEBI:58359"/>
        <dbReference type="EC" id="3.5.1.2"/>
    </reaction>
</comment>
<comment type="pathway">
    <text evidence="1">Cofactor biosynthesis; pyridoxal 5'-phosphate biosynthesis.</text>
</comment>
<comment type="subunit">
    <text evidence="1">In the presence of PdxS, forms a dodecamer of heterodimers. Only shows activity in the heterodimer.</text>
</comment>
<comment type="similarity">
    <text evidence="1">Belongs to the glutaminase PdxT/SNO family.</text>
</comment>
<keyword id="KW-0315">Glutamine amidotransferase</keyword>
<keyword id="KW-0378">Hydrolase</keyword>
<keyword id="KW-0456">Lyase</keyword>
<keyword id="KW-0663">Pyridoxal phosphate</keyword>
<keyword id="KW-1185">Reference proteome</keyword>
<protein>
    <recommendedName>
        <fullName evidence="1">Pyridoxal 5'-phosphate synthase subunit PdxT</fullName>
        <ecNumber evidence="1">4.3.3.6</ecNumber>
    </recommendedName>
    <alternativeName>
        <fullName evidence="1">Pdx2</fullName>
    </alternativeName>
    <alternativeName>
        <fullName evidence="1">Pyridoxal 5'-phosphate synthase glutaminase subunit</fullName>
        <ecNumber evidence="1">3.5.1.2</ecNumber>
    </alternativeName>
</protein>
<feature type="chain" id="PRO_0000255827" description="Pyridoxal 5'-phosphate synthase subunit PdxT">
    <location>
        <begin position="1"/>
        <end position="195"/>
    </location>
</feature>
<feature type="active site" description="Nucleophile" evidence="1">
    <location>
        <position position="78"/>
    </location>
</feature>
<feature type="active site" description="Charge relay system" evidence="1">
    <location>
        <position position="172"/>
    </location>
</feature>
<feature type="active site" description="Charge relay system" evidence="1">
    <location>
        <position position="174"/>
    </location>
</feature>
<feature type="binding site" evidence="1">
    <location>
        <begin position="46"/>
        <end position="48"/>
    </location>
    <ligand>
        <name>L-glutamine</name>
        <dbReference type="ChEBI" id="CHEBI:58359"/>
    </ligand>
</feature>
<feature type="binding site" evidence="1">
    <location>
        <position position="107"/>
    </location>
    <ligand>
        <name>L-glutamine</name>
        <dbReference type="ChEBI" id="CHEBI:58359"/>
    </ligand>
</feature>
<feature type="binding site" evidence="1">
    <location>
        <begin position="135"/>
        <end position="136"/>
    </location>
    <ligand>
        <name>L-glutamine</name>
        <dbReference type="ChEBI" id="CHEBI:58359"/>
    </ligand>
</feature>
<sequence length="195" mass="21290">MIIGVLSVQGGFVEHMRSIERLGHEARAVRRAEQLEGLDGLIMPGGESTTMSKLLELGGMLEPLRELIADGLPVFGTCAGLILLADRVLDTRSDAHSLHAMDITVRRNAFGRQVDSFETQLPFGDIDTPVEAVFIRAPKVEEVGDGVEVVSTLPDGTVVGVRQGNVLGCSFHPELSEDDRVHEYFLRMVKQRGVE</sequence>
<organism>
    <name type="scientific">Corynebacterium jeikeium (strain K411)</name>
    <dbReference type="NCBI Taxonomy" id="306537"/>
    <lineage>
        <taxon>Bacteria</taxon>
        <taxon>Bacillati</taxon>
        <taxon>Actinomycetota</taxon>
        <taxon>Actinomycetes</taxon>
        <taxon>Mycobacteriales</taxon>
        <taxon>Corynebacteriaceae</taxon>
        <taxon>Corynebacterium</taxon>
    </lineage>
</organism>
<reference key="1">
    <citation type="journal article" date="2005" name="J. Bacteriol.">
        <title>Complete genome sequence and analysis of the multiresistant nosocomial pathogen Corynebacterium jeikeium K411, a lipid-requiring bacterium of the human skin flora.</title>
        <authorList>
            <person name="Tauch A."/>
            <person name="Kaiser O."/>
            <person name="Hain T."/>
            <person name="Goesmann A."/>
            <person name="Weisshaar B."/>
            <person name="Albersmeier A."/>
            <person name="Bekel T."/>
            <person name="Bischoff N."/>
            <person name="Brune I."/>
            <person name="Chakraborty T."/>
            <person name="Kalinowski J."/>
            <person name="Meyer F."/>
            <person name="Rupp O."/>
            <person name="Schneiker S."/>
            <person name="Viehoever P."/>
            <person name="Puehler A."/>
        </authorList>
    </citation>
    <scope>NUCLEOTIDE SEQUENCE [LARGE SCALE GENOMIC DNA]</scope>
    <source>
        <strain>K411</strain>
    </source>
</reference>
<gene>
    <name evidence="1" type="primary">pdxT</name>
    <name type="ordered locus">jk1058</name>
</gene>